<proteinExistence type="inferred from homology"/>
<protein>
    <recommendedName>
        <fullName evidence="1">Phycocyanobilin:ferredoxin oxidoreductase</fullName>
        <ecNumber evidence="1">1.3.7.5</ecNumber>
    </recommendedName>
</protein>
<feature type="chain" id="PRO_1000190493" description="Phycocyanobilin:ferredoxin oxidoreductase">
    <location>
        <begin position="1"/>
        <end position="246"/>
    </location>
</feature>
<gene>
    <name evidence="1" type="primary">pcyA</name>
    <name type="ordered locus">cce_3569</name>
</gene>
<organism>
    <name type="scientific">Crocosphaera subtropica (strain ATCC 51142 / BH68)</name>
    <name type="common">Cyanothece sp. (strain ATCC 51142)</name>
    <dbReference type="NCBI Taxonomy" id="43989"/>
    <lineage>
        <taxon>Bacteria</taxon>
        <taxon>Bacillati</taxon>
        <taxon>Cyanobacteriota</taxon>
        <taxon>Cyanophyceae</taxon>
        <taxon>Oscillatoriophycideae</taxon>
        <taxon>Chroococcales</taxon>
        <taxon>Aphanothecaceae</taxon>
        <taxon>Crocosphaera</taxon>
        <taxon>Crocosphaera subtropica</taxon>
    </lineage>
</organism>
<reference key="1">
    <citation type="journal article" date="2008" name="Proc. Natl. Acad. Sci. U.S.A.">
        <title>The genome of Cyanothece 51142, a unicellular diazotrophic cyanobacterium important in the marine nitrogen cycle.</title>
        <authorList>
            <person name="Welsh E.A."/>
            <person name="Liberton M."/>
            <person name="Stoeckel J."/>
            <person name="Loh T."/>
            <person name="Elvitigala T."/>
            <person name="Wang C."/>
            <person name="Wollam A."/>
            <person name="Fulton R.S."/>
            <person name="Clifton S.W."/>
            <person name="Jacobs J.M."/>
            <person name="Aurora R."/>
            <person name="Ghosh B.K."/>
            <person name="Sherman L.A."/>
            <person name="Smith R.D."/>
            <person name="Wilson R.K."/>
            <person name="Pakrasi H.B."/>
        </authorList>
    </citation>
    <scope>NUCLEOTIDE SEQUENCE [LARGE SCALE GENOMIC DNA]</scope>
    <source>
        <strain>ATCC 51142 / BH68</strain>
    </source>
</reference>
<comment type="function">
    <text evidence="1">Catalyzes the four-electron reduction of biliverdin IX-alpha (2-electron reduction at both the A and D rings); the reaction proceeds via an isolatable 2-electron intermediate, 181,182-dihydrobiliverdin.</text>
</comment>
<comment type="catalytic activity">
    <reaction evidence="1">
        <text>(2R,3Z)-phycocyanobilin + 4 oxidized [2Fe-2S]-[ferredoxin] = biliverdin IXalpha + 4 reduced [2Fe-2S]-[ferredoxin] + 4 H(+)</text>
        <dbReference type="Rhea" id="RHEA:15309"/>
        <dbReference type="Rhea" id="RHEA-COMP:10000"/>
        <dbReference type="Rhea" id="RHEA-COMP:10001"/>
        <dbReference type="ChEBI" id="CHEBI:15378"/>
        <dbReference type="ChEBI" id="CHEBI:33737"/>
        <dbReference type="ChEBI" id="CHEBI:33738"/>
        <dbReference type="ChEBI" id="CHEBI:57437"/>
        <dbReference type="ChEBI" id="CHEBI:57991"/>
        <dbReference type="EC" id="1.3.7.5"/>
    </reaction>
</comment>
<comment type="similarity">
    <text evidence="1">Belongs to the HY2 family.</text>
</comment>
<accession>B1X018</accession>
<name>PCYA_CROS5</name>
<sequence>MTTVKTSPTTLPLHPLIHQLAEVIISHWQDYLDLSPYELPDGLGYVEGKLEGEKLVIENRCYQSPQFRKMHLELAKVGQGLDILHCVMFPNPDYALPMFGCDIVAGKGGVSAAIADLSPANPELTLSNSYNQALSQLETPNFSDQRELPEWGDIFSEYCLFIRPHTPEEEKLFLKRVGDFLKVHCQQANQSQPGSTQQREFNIQGQEYYCRKQQQNDKTRRVLEKAFGEAWANKYMTQVLFDIPNH</sequence>
<dbReference type="EC" id="1.3.7.5" evidence="1"/>
<dbReference type="EMBL" id="CP000806">
    <property type="protein sequence ID" value="ACB52917.1"/>
    <property type="molecule type" value="Genomic_DNA"/>
</dbReference>
<dbReference type="RefSeq" id="WP_009545267.1">
    <property type="nucleotide sequence ID" value="NC_010546.1"/>
</dbReference>
<dbReference type="SMR" id="B1X018"/>
<dbReference type="STRING" id="43989.cce_3569"/>
<dbReference type="KEGG" id="cyt:cce_3569"/>
<dbReference type="eggNOG" id="ENOG502Z7RN">
    <property type="taxonomic scope" value="Bacteria"/>
</dbReference>
<dbReference type="HOGENOM" id="CLU_074224_0_0_3"/>
<dbReference type="OrthoDB" id="581340at2"/>
<dbReference type="Proteomes" id="UP000001203">
    <property type="component" value="Chromosome circular"/>
</dbReference>
<dbReference type="GO" id="GO:0050897">
    <property type="term" value="F:cobalt ion binding"/>
    <property type="evidence" value="ECO:0007669"/>
    <property type="project" value="InterPro"/>
</dbReference>
<dbReference type="GO" id="GO:0050620">
    <property type="term" value="F:phycocyanobilin:ferredoxin oxidoreductase activity"/>
    <property type="evidence" value="ECO:0007669"/>
    <property type="project" value="UniProtKB-UniRule"/>
</dbReference>
<dbReference type="GO" id="GO:0010024">
    <property type="term" value="P:phytochromobilin biosynthetic process"/>
    <property type="evidence" value="ECO:0007669"/>
    <property type="project" value="InterPro"/>
</dbReference>
<dbReference type="Gene3D" id="3.40.1500.20">
    <property type="match status" value="1"/>
</dbReference>
<dbReference type="HAMAP" id="MF_00618">
    <property type="entry name" value="Ferredoxin_bilin_red"/>
    <property type="match status" value="1"/>
</dbReference>
<dbReference type="InterPro" id="IPR009249">
    <property type="entry name" value="Ferredoxin-dep_bilin_Rdtase"/>
</dbReference>
<dbReference type="InterPro" id="IPR022870">
    <property type="entry name" value="Ferredoxin_bilin_OxRdtase"/>
</dbReference>
<dbReference type="NCBIfam" id="NF002760">
    <property type="entry name" value="PRK02816.1"/>
    <property type="match status" value="1"/>
</dbReference>
<dbReference type="PANTHER" id="PTHR34557">
    <property type="entry name" value="PHYTOCHROMOBILIN:FERREDOXIN OXIDOREDUCTASE, CHLOROPLASTIC"/>
    <property type="match status" value="1"/>
</dbReference>
<dbReference type="PANTHER" id="PTHR34557:SF1">
    <property type="entry name" value="PHYTOCHROMOBILIN:FERREDOXIN OXIDOREDUCTASE, CHLOROPLASTIC"/>
    <property type="match status" value="1"/>
</dbReference>
<dbReference type="Pfam" id="PF05996">
    <property type="entry name" value="Fe_bilin_red"/>
    <property type="match status" value="1"/>
</dbReference>
<keyword id="KW-0560">Oxidoreductase</keyword>
<keyword id="KW-1185">Reference proteome</keyword>
<evidence type="ECO:0000255" key="1">
    <source>
        <dbReference type="HAMAP-Rule" id="MF_00618"/>
    </source>
</evidence>